<protein>
    <recommendedName>
        <fullName evidence="7">Cytochrome P450 monooxygenase tenA</fullName>
        <ecNumber evidence="4">1.-.-.-</ecNumber>
    </recommendedName>
    <alternativeName>
        <fullName evidence="7">Tenellin biosynthesis protein A</fullName>
    </alternativeName>
</protein>
<accession>A0JJT8</accession>
<name>TENA_BEABA</name>
<evidence type="ECO:0000250" key="1">
    <source>
        <dbReference type="UniProtKB" id="P04798"/>
    </source>
</evidence>
<evidence type="ECO:0000255" key="2"/>
<evidence type="ECO:0000269" key="3">
    <source>
    </source>
</evidence>
<evidence type="ECO:0000269" key="4">
    <source>
    </source>
</evidence>
<evidence type="ECO:0000269" key="5">
    <source>
    </source>
</evidence>
<evidence type="ECO:0000269" key="6">
    <source>
    </source>
</evidence>
<evidence type="ECO:0000303" key="7">
    <source>
    </source>
</evidence>
<evidence type="ECO:0000303" key="8">
    <source>
    </source>
</evidence>
<evidence type="ECO:0000305" key="9"/>
<organism>
    <name type="scientific">Beauveria bassiana</name>
    <name type="common">White muscardine disease fungus</name>
    <name type="synonym">Tritirachium shiotae</name>
    <dbReference type="NCBI Taxonomy" id="176275"/>
    <lineage>
        <taxon>Eukaryota</taxon>
        <taxon>Fungi</taxon>
        <taxon>Dikarya</taxon>
        <taxon>Ascomycota</taxon>
        <taxon>Pezizomycotina</taxon>
        <taxon>Sordariomycetes</taxon>
        <taxon>Hypocreomycetidae</taxon>
        <taxon>Hypocreales</taxon>
        <taxon>Cordycipitaceae</taxon>
        <taxon>Beauveria</taxon>
    </lineage>
</organism>
<feature type="chain" id="PRO_0000438451" description="Cytochrome P450 monooxygenase tenA">
    <location>
        <begin position="1"/>
        <end position="508"/>
    </location>
</feature>
<feature type="transmembrane region" description="Helical" evidence="2">
    <location>
        <begin position="8"/>
        <end position="24"/>
    </location>
</feature>
<feature type="binding site" description="axial binding residue" evidence="1">
    <location>
        <position position="456"/>
    </location>
    <ligand>
        <name>heme</name>
        <dbReference type="ChEBI" id="CHEBI:30413"/>
    </ligand>
    <ligandPart>
        <name>Fe</name>
        <dbReference type="ChEBI" id="CHEBI:18248"/>
    </ligandPart>
</feature>
<keyword id="KW-0408">Iron</keyword>
<keyword id="KW-0472">Membrane</keyword>
<keyword id="KW-0479">Metal-binding</keyword>
<keyword id="KW-0503">Monooxygenase</keyword>
<keyword id="KW-0560">Oxidoreductase</keyword>
<keyword id="KW-0812">Transmembrane</keyword>
<keyword id="KW-1133">Transmembrane helix</keyword>
<gene>
    <name evidence="8" type="primary">tenA</name>
    <name evidence="7" type="synonym">ORF1</name>
</gene>
<proteinExistence type="evidence at protein level"/>
<reference key="1">
    <citation type="journal article" date="2007" name="ChemBioChem">
        <title>Biosynthesis of the 2-pyridone tenellin in the insect pathogenic fungus Beauveria bassiana.</title>
        <authorList>
            <person name="Eley K.L."/>
            <person name="Halo L.M."/>
            <person name="Song Z."/>
            <person name="Powles H."/>
            <person name="Cox R.J."/>
            <person name="Bailey A.M."/>
            <person name="Lazarus C.M."/>
            <person name="Simpson T.J."/>
        </authorList>
    </citation>
    <scope>NUCLEOTIDE SEQUENCE [GENOMIC DNA]</scope>
    <scope>FUNCTION</scope>
    <scope>PATHWAY</scope>
    <source>
        <strain>CBS 110.25</strain>
    </source>
</reference>
<reference key="2">
    <citation type="journal article" date="2008" name="J. Am. Chem. Soc.">
        <title>Late stage oxidations during the biosynthesis of the 2-pyridone tenellin in the entomopathogenic fungus Beauveria bassiana.</title>
        <authorList>
            <person name="Halo L.M."/>
            <person name="Heneghan M.N."/>
            <person name="Yakasai A.A."/>
            <person name="Song Z."/>
            <person name="Williams K."/>
            <person name="Bailey A.M."/>
            <person name="Cox R.J."/>
            <person name="Lazarus C.M."/>
            <person name="Simpson T.J."/>
        </authorList>
    </citation>
    <scope>FUNCTION</scope>
    <scope>DISRUPTION PHENOTYPE</scope>
    <scope>CATALYTIC ACTIVITY</scope>
    <scope>PATHWAY</scope>
</reference>
<reference key="3">
    <citation type="journal article" date="2010" name="ChemBioChem">
        <title>First heterologous reconstruction of a complete functional fungal biosynthetic multigene cluster.</title>
        <authorList>
            <person name="Heneghan M.N."/>
            <person name="Yakasai A.A."/>
            <person name="Halo L.M."/>
            <person name="Song Z."/>
            <person name="Bailey A.M."/>
            <person name="Simpson T.J."/>
            <person name="Cox R.J."/>
            <person name="Lazarus C.M."/>
        </authorList>
    </citation>
    <scope>FUNCTION</scope>
    <scope>PATHWAY</scope>
</reference>
<reference key="4">
    <citation type="journal article" date="2021" name="MBio">
        <title>Inductive production of the iron-chelating 2-pyridones benefits the producing fungus to compete for diverse niches.</title>
        <authorList>
            <person name="Chen B."/>
            <person name="Sun Y."/>
            <person name="Li S."/>
            <person name="Yin Y."/>
            <person name="Wang C."/>
        </authorList>
    </citation>
    <scope>FUNCTION</scope>
    <scope>DISRUPTION PHENOTYPE</scope>
    <scope>INDUCTION</scope>
    <scope>PATHWAY</scope>
</reference>
<comment type="function">
    <text evidence="3 4 5 6">Cytochrome P450 monooxygenase; part of the gene cluster that mediates the biosynthesis of tenellin-type 2-pyridones, iron-chelating compounds involved in iron stress tolerance, competition with the natural competitor fungus Metarhizium robertsii and insect hosts infection (PubMed:17216664, PubMed:19067514, PubMed:20575135, PubMed:34903054). TenA catalyzes an oxidative ring expansion of pretenellin A and 14-hydropretellenin A to form the 2-pyridone core, leading to the production of pretenellin B and pyridovericin, respectively (PubMed:19067514, PubMed:34903054). The pathway begins with the assembly of the polyketide-amino acid backbone by the hybrid PKS-NRPS tenS with the help of the enoyl reductase tenC. These enzymes catalyze the synthesis of the pyrrolidine-2-dione intermediates pretellinin A, 11-hydropretellenin A, 12-hydropretellenin A, 13-hydropretellenin A, 14-hydropretellenin A, 12-oxopretellenin A and prototellinin D. The cytochrome P450 monooxygenase tenA then catalyzes an oxidative ring expansion of pretenellin A and 14-hydropretellenin A to form the 2-pyridone core, leading to pretenellin B and pyridovericin, respectively. The cytochrome P450 monooxygenase tenB is then required for the selective N-hydroxylation of the 2-pyridone nitrogen of yield tellinin and 15-hydroxytellenin (15-HT), respectively. The UDP-glucosyltransferase GT1 and the methyltransferase MT1, located outside the tenS gene cluster, contribute to the stepwise glycosylation and methylation of 15-HT to obtain the glycoside pyridovericin-N-O-(4-O-methyl-beta-D-glucopyranoside) (PMGP). Additional related compounds such as 1-O-methyl-15-HT, (8Z)-1-O-methyl-15-HT, and O-methyltenellin A are also produced but the enzymes involved in their biosynthesis have still to be determined (PubMed:34903054).</text>
</comment>
<comment type="cofactor">
    <cofactor evidence="1">
        <name>heme</name>
        <dbReference type="ChEBI" id="CHEBI:30413"/>
    </cofactor>
</comment>
<comment type="pathway">
    <text evidence="3 4 5 6">Secondary metabolite biosynthesis.</text>
</comment>
<comment type="subcellular location">
    <subcellularLocation>
        <location evidence="2">Membrane</location>
        <topology evidence="2">Single-pass membrane protein</topology>
    </subcellularLocation>
</comment>
<comment type="induction">
    <text evidence="6">Expression is positively regulated by the cluster-specific transcription factor tenR and is induced during cocultures with the natural competitor fungus Metarhizium robertsii.</text>
</comment>
<comment type="disruption phenotype">
    <text evidence="4 6">Fails to produce tenellin, and leads to the accumulation of 11-hydropretellenin A, 12-hydropretellenin A, 13-hydropretellenin A, 14-hydropretellenin A, 12-oxopretellenin A and prototellinin D.</text>
</comment>
<comment type="similarity">
    <text evidence="9">Belongs to the cytochrome P450 family.</text>
</comment>
<sequence length="508" mass="58450">MLPLLDSVSLPYLILSACLSVILLRRFLAHDKGGSKSIAQGCLPEPRLRQWDPIFGFGIVISQARALRGHRYLEWLRDLHASMPHTKTFSANYGGYRWIFSIEPEILKAVYATNLQNFGVEPIRQHPPGFQPFAHKGVSTSDGDDWSFSRTLIKPFFERSVYISTDRIKPFADKFMTLLPDDGETFDIQPLLQRWFLDITSEFIFGKSQDSMTHADRAEVTWAMADVLRGGRQRAQTHRILWAFNWDWWFEAVEKVHGFLNPYIRSTLKELEERQQRIKDGLPVDEERTDLLWSMATMLPDEEELRSQVCLIFVPNNDTTSMFIGHCLYFLARNSNAWKRLRDEVDAVGDAPITFEMLRNMKYLNGILNETHRLIPNNVTQVRAALSDVVLPLGGGPNGKAPLDVRKGDIVSVTKTVMYRDPEQWGPDANEYRPERWDGMRGGWHFLPYGGGPRRCPAQMMVQNESAYMLFRLAQKYSTIVARDPEPFRARMRIGPSSMHGVKIAFYK</sequence>
<dbReference type="EC" id="1.-.-.-" evidence="4"/>
<dbReference type="EMBL" id="AM409327">
    <property type="protein sequence ID" value="CAL69594.1"/>
    <property type="molecule type" value="Genomic_DNA"/>
</dbReference>
<dbReference type="SMR" id="A0JJT8"/>
<dbReference type="KEGG" id="ag:CAL69594"/>
<dbReference type="GO" id="GO:0016020">
    <property type="term" value="C:membrane"/>
    <property type="evidence" value="ECO:0007669"/>
    <property type="project" value="UniProtKB-SubCell"/>
</dbReference>
<dbReference type="GO" id="GO:0020037">
    <property type="term" value="F:heme binding"/>
    <property type="evidence" value="ECO:0007669"/>
    <property type="project" value="InterPro"/>
</dbReference>
<dbReference type="GO" id="GO:0005506">
    <property type="term" value="F:iron ion binding"/>
    <property type="evidence" value="ECO:0007669"/>
    <property type="project" value="InterPro"/>
</dbReference>
<dbReference type="GO" id="GO:0016712">
    <property type="term" value="F:oxidoreductase activity, acting on paired donors, with incorporation or reduction of molecular oxygen, reduced flavin or flavoprotein as one donor, and incorporation of one atom of oxygen"/>
    <property type="evidence" value="ECO:0007669"/>
    <property type="project" value="InterPro"/>
</dbReference>
<dbReference type="Gene3D" id="1.10.630.10">
    <property type="entry name" value="Cytochrome P450"/>
    <property type="match status" value="1"/>
</dbReference>
<dbReference type="InterPro" id="IPR001128">
    <property type="entry name" value="Cyt_P450"/>
</dbReference>
<dbReference type="InterPro" id="IPR002974">
    <property type="entry name" value="Cyt_P450_E_CYP52_ascomycetes"/>
</dbReference>
<dbReference type="InterPro" id="IPR047146">
    <property type="entry name" value="Cyt_P450_E_CYP52_fungi"/>
</dbReference>
<dbReference type="InterPro" id="IPR036396">
    <property type="entry name" value="Cyt_P450_sf"/>
</dbReference>
<dbReference type="PANTHER" id="PTHR24287:SF18">
    <property type="entry name" value="CYTOCHROME P450 MONOOXYGENASE APDE-RELATED"/>
    <property type="match status" value="1"/>
</dbReference>
<dbReference type="PANTHER" id="PTHR24287">
    <property type="entry name" value="P450, PUTATIVE (EUROFUNG)-RELATED"/>
    <property type="match status" value="1"/>
</dbReference>
<dbReference type="Pfam" id="PF00067">
    <property type="entry name" value="p450"/>
    <property type="match status" value="1"/>
</dbReference>
<dbReference type="PRINTS" id="PR01239">
    <property type="entry name" value="EP450IICYP52"/>
</dbReference>
<dbReference type="SUPFAM" id="SSF48264">
    <property type="entry name" value="Cytochrome P450"/>
    <property type="match status" value="1"/>
</dbReference>